<name>TPP2_DROME</name>
<organism>
    <name type="scientific">Drosophila melanogaster</name>
    <name type="common">Fruit fly</name>
    <dbReference type="NCBI Taxonomy" id="7227"/>
    <lineage>
        <taxon>Eukaryota</taxon>
        <taxon>Metazoa</taxon>
        <taxon>Ecdysozoa</taxon>
        <taxon>Arthropoda</taxon>
        <taxon>Hexapoda</taxon>
        <taxon>Insecta</taxon>
        <taxon>Pterygota</taxon>
        <taxon>Neoptera</taxon>
        <taxon>Endopterygota</taxon>
        <taxon>Diptera</taxon>
        <taxon>Brachycera</taxon>
        <taxon>Muscomorpha</taxon>
        <taxon>Ephydroidea</taxon>
        <taxon>Drosophilidae</taxon>
        <taxon>Drosophila</taxon>
        <taxon>Sophophora</taxon>
    </lineage>
</organism>
<proteinExistence type="evidence at protein level"/>
<gene>
    <name type="primary">TppII</name>
    <name type="ORF">CG3991</name>
</gene>
<comment type="function">
    <text evidence="1">Component of the proteolytic cascade acting downstream of the 26S proteasome in the ubiquitin-proteasome pathway (By similarity). Efficiently cleaves Ala-Ala-Ala-polypeptide and Pro-Pro-Ala-polypeptide, Val-Leu-Lys-polypeptide only at high concentration. Does not cleave Ala-Phe-Pro-polypeptide nor Pro-Leu-Gly-polypeptide.</text>
</comment>
<comment type="catalytic activity">
    <reaction evidence="8">
        <text>Release of an N-terminal tripeptide from a polypeptide.</text>
        <dbReference type="EC" id="3.4.14.10"/>
    </reaction>
</comment>
<comment type="activity regulation">
    <text evidence="8">Inhibited by phenylmethanesulfonyl fluoride (PMSF) and butabindide, but not by peptidase inhibitor pepstatin, EDTA, nor bestatin.</text>
</comment>
<comment type="biophysicochemical properties">
    <phDependence>
        <text evidence="8">Optimum pH is 7.5-7.8.</text>
    </phDependence>
</comment>
<comment type="subunit">
    <text evidence="4 5 7">Homooligomer; forms a complex of 6 MDa probably composed of 40 subunits. Forms a structure consisting of 2 segmented and twisted strands that form a spindle-shaped structure. Each strand is composed of 10 segments (a segment being a homodimer oriented head to head), stacking of these segments leads to the formation of a twisted single strand. 2 strands compose the fully assembled spindle.</text>
</comment>
<comment type="interaction">
    <interactant intactId="EBI-3416753">
        <id>Q9V6K1-2</id>
    </interactant>
    <interactant intactId="EBI-3416753">
        <id>Q9V6K1-2</id>
        <label>TppII</label>
    </interactant>
    <organismsDiffer>false</organismsDiffer>
    <experiments>3</experiments>
</comment>
<comment type="subcellular location">
    <subcellularLocation>
        <location evidence="11">Cytoplasm</location>
    </subcellularLocation>
</comment>
<comment type="alternative products">
    <event type="alternative splicing"/>
    <isoform>
        <id>Q9V6K1-1</id>
        <name>1</name>
        <name>D</name>
        <sequence type="displayed"/>
    </isoform>
    <isoform>
        <id>Q9V6K1-2</id>
        <name>2</name>
        <name>A</name>
        <sequence type="described" ref="VSP_015220"/>
    </isoform>
</comment>
<comment type="miscellaneous">
    <text evidence="12">The limitation of proteolytic products to tripeptides is achieved by tailoring the size of the substrate-binding cleft: the two negatively charged residues Glu-399 and Glu-430 that are blocking position P4 limit the number of residues that can be accommodated in the binding cleft and thus create a molecular ruler. At the same time, they orient substrates so that the tripeptides are removed exclusively from the N-terminus (PubMed:20676100).</text>
</comment>
<comment type="similarity">
    <text evidence="11">Belongs to the peptidase S8 family.</text>
</comment>
<protein>
    <recommendedName>
        <fullName>Tripeptidyl-peptidase 2</fullName>
        <shortName>TPP-2</shortName>
        <ecNumber evidence="8">3.4.14.10</ecNumber>
    </recommendedName>
    <alternativeName>
        <fullName>Tripeptidyl aminopeptidase</fullName>
    </alternativeName>
    <alternativeName>
        <fullName>Tripeptidyl-peptidase II</fullName>
        <shortName>TPP-II</shortName>
        <shortName>dTPP II</shortName>
    </alternativeName>
</protein>
<evidence type="ECO:0000250" key="1"/>
<evidence type="ECO:0000255" key="2">
    <source>
        <dbReference type="PROSITE-ProRule" id="PRU01240"/>
    </source>
</evidence>
<evidence type="ECO:0000256" key="3">
    <source>
        <dbReference type="SAM" id="MobiDB-lite"/>
    </source>
</evidence>
<evidence type="ECO:0000269" key="4">
    <source>
    </source>
</evidence>
<evidence type="ECO:0000269" key="5">
    <source>
    </source>
</evidence>
<evidence type="ECO:0000269" key="6">
    <source>
    </source>
</evidence>
<evidence type="ECO:0000269" key="7">
    <source>
    </source>
</evidence>
<evidence type="ECO:0000269" key="8">
    <source>
    </source>
</evidence>
<evidence type="ECO:0000303" key="9">
    <source>
    </source>
</evidence>
<evidence type="ECO:0000303" key="10">
    <source ref="5"/>
</evidence>
<evidence type="ECO:0000305" key="11"/>
<evidence type="ECO:0000305" key="12">
    <source>
    </source>
</evidence>
<evidence type="ECO:0007829" key="13">
    <source>
        <dbReference type="PDB" id="3LXU"/>
    </source>
</evidence>
<keyword id="KW-0002">3D-structure</keyword>
<keyword id="KW-0025">Alternative splicing</keyword>
<keyword id="KW-0031">Aminopeptidase</keyword>
<keyword id="KW-0963">Cytoplasm</keyword>
<keyword id="KW-0378">Hydrolase</keyword>
<keyword id="KW-0597">Phosphoprotein</keyword>
<keyword id="KW-0645">Protease</keyword>
<keyword id="KW-1185">Reference proteome</keyword>
<keyword id="KW-0720">Serine protease</keyword>
<dbReference type="EC" id="3.4.14.10" evidence="8"/>
<dbReference type="EMBL" id="AF035251">
    <property type="protein sequence ID" value="AAC28563.1"/>
    <property type="molecule type" value="mRNA"/>
</dbReference>
<dbReference type="EMBL" id="AE013599">
    <property type="protein sequence ID" value="AAF58422.2"/>
    <property type="molecule type" value="Genomic_DNA"/>
</dbReference>
<dbReference type="EMBL" id="AE013599">
    <property type="protein sequence ID" value="AAM68593.1"/>
    <property type="molecule type" value="Genomic_DNA"/>
</dbReference>
<dbReference type="EMBL" id="BT001404">
    <property type="protein sequence ID" value="AAN71159.1"/>
    <property type="molecule type" value="mRNA"/>
</dbReference>
<dbReference type="EMBL" id="BT003260">
    <property type="protein sequence ID" value="AAO25017.1"/>
    <property type="molecule type" value="mRNA"/>
</dbReference>
<dbReference type="EMBL" id="BT044288">
    <property type="protein sequence ID" value="ACH92353.1"/>
    <property type="molecule type" value="mRNA"/>
</dbReference>
<dbReference type="PIR" id="T13930">
    <property type="entry name" value="T13930"/>
</dbReference>
<dbReference type="RefSeq" id="NP_001286376.1">
    <molecule id="Q9V6K1-2"/>
    <property type="nucleotide sequence ID" value="NM_001299447.1"/>
</dbReference>
<dbReference type="RefSeq" id="NP_477247.1">
    <molecule id="Q9V6K1-2"/>
    <property type="nucleotide sequence ID" value="NM_057899.3"/>
</dbReference>
<dbReference type="RefSeq" id="NP_725252.1">
    <molecule id="Q9V6K1-1"/>
    <property type="nucleotide sequence ID" value="NM_165966.2"/>
</dbReference>
<dbReference type="PDB" id="3LXU">
    <property type="method" value="X-ray"/>
    <property type="resolution" value="3.14 A"/>
    <property type="chains" value="X=88-1441"/>
</dbReference>
<dbReference type="PDBsum" id="3LXU"/>
<dbReference type="SMR" id="Q9V6K1"/>
<dbReference type="BioGRID" id="62211">
    <property type="interactions" value="8"/>
</dbReference>
<dbReference type="DIP" id="DIP-59032N"/>
<dbReference type="FunCoup" id="Q9V6K1">
    <property type="interactions" value="2206"/>
</dbReference>
<dbReference type="IntAct" id="Q9V6K1">
    <property type="interactions" value="62"/>
</dbReference>
<dbReference type="STRING" id="7227.FBpp0086887"/>
<dbReference type="MEROPS" id="S08.090"/>
<dbReference type="iPTMnet" id="Q9V6K1"/>
<dbReference type="PaxDb" id="7227-FBpp0086887"/>
<dbReference type="DNASU" id="36444"/>
<dbReference type="EnsemblMetazoa" id="FBtr0087774">
    <molecule id="Q9V6K1-1"/>
    <property type="protein sequence ID" value="FBpp0086887"/>
    <property type="gene ID" value="FBgn0020370"/>
</dbReference>
<dbReference type="EnsemblMetazoa" id="FBtr0087775">
    <molecule id="Q9V6K1-2"/>
    <property type="protein sequence ID" value="FBpp0086888"/>
    <property type="gene ID" value="FBgn0020370"/>
</dbReference>
<dbReference type="EnsemblMetazoa" id="FBtr0344199">
    <molecule id="Q9V6K1-2"/>
    <property type="protein sequence ID" value="FBpp0310608"/>
    <property type="gene ID" value="FBgn0020370"/>
</dbReference>
<dbReference type="GeneID" id="36444"/>
<dbReference type="KEGG" id="dme:Dmel_CG3991"/>
<dbReference type="AGR" id="FB:FBgn0020370"/>
<dbReference type="CTD" id="36444"/>
<dbReference type="FlyBase" id="FBgn0020370">
    <property type="gene designation" value="TppII"/>
</dbReference>
<dbReference type="VEuPathDB" id="VectorBase:FBgn0020370"/>
<dbReference type="eggNOG" id="KOG1114">
    <property type="taxonomic scope" value="Eukaryota"/>
</dbReference>
<dbReference type="GeneTree" id="ENSGT00390000014623"/>
<dbReference type="InParanoid" id="Q9V6K1"/>
<dbReference type="OMA" id="SLRDFQC"/>
<dbReference type="OrthoDB" id="10256524at2759"/>
<dbReference type="PhylomeDB" id="Q9V6K1"/>
<dbReference type="BRENDA" id="3.4.14.10">
    <property type="organism ID" value="1994"/>
</dbReference>
<dbReference type="Reactome" id="R-DME-983168">
    <property type="pathway name" value="Antigen processing: Ubiquitination &amp; Proteasome degradation"/>
</dbReference>
<dbReference type="BioGRID-ORCS" id="36444">
    <property type="hits" value="0 hits in 1 CRISPR screen"/>
</dbReference>
<dbReference type="ChiTaRS" id="TppII">
    <property type="organism name" value="fly"/>
</dbReference>
<dbReference type="EvolutionaryTrace" id="Q9V6K1"/>
<dbReference type="GenomeRNAi" id="36444"/>
<dbReference type="PRO" id="PR:Q9V6K1"/>
<dbReference type="Proteomes" id="UP000000803">
    <property type="component" value="Chromosome 2R"/>
</dbReference>
<dbReference type="Bgee" id="FBgn0020370">
    <property type="expression patterns" value="Expressed in egg cell and 178 other cell types or tissues"/>
</dbReference>
<dbReference type="ExpressionAtlas" id="Q9V6K1">
    <property type="expression patterns" value="baseline and differential"/>
</dbReference>
<dbReference type="GO" id="GO:0005829">
    <property type="term" value="C:cytosol"/>
    <property type="evidence" value="ECO:0000314"/>
    <property type="project" value="FlyBase"/>
</dbReference>
<dbReference type="GO" id="GO:0032991">
    <property type="term" value="C:protein-containing complex"/>
    <property type="evidence" value="ECO:0000314"/>
    <property type="project" value="UniProtKB"/>
</dbReference>
<dbReference type="GO" id="GO:0004177">
    <property type="term" value="F:aminopeptidase activity"/>
    <property type="evidence" value="ECO:0007669"/>
    <property type="project" value="UniProtKB-KW"/>
</dbReference>
<dbReference type="GO" id="GO:0042802">
    <property type="term" value="F:identical protein binding"/>
    <property type="evidence" value="ECO:0000353"/>
    <property type="project" value="IntAct"/>
</dbReference>
<dbReference type="GO" id="GO:0017171">
    <property type="term" value="F:serine hydrolase activity"/>
    <property type="evidence" value="ECO:0007005"/>
    <property type="project" value="FlyBase"/>
</dbReference>
<dbReference type="GO" id="GO:0004252">
    <property type="term" value="F:serine-type endopeptidase activity"/>
    <property type="evidence" value="ECO:0007669"/>
    <property type="project" value="InterPro"/>
</dbReference>
<dbReference type="GO" id="GO:0008240">
    <property type="term" value="F:tripeptidyl-peptidase activity"/>
    <property type="evidence" value="ECO:0000314"/>
    <property type="project" value="UniProtKB"/>
</dbReference>
<dbReference type="GO" id="GO:0006508">
    <property type="term" value="P:proteolysis"/>
    <property type="evidence" value="ECO:0000314"/>
    <property type="project" value="UniProtKB"/>
</dbReference>
<dbReference type="CDD" id="cd04857">
    <property type="entry name" value="Peptidases_S8_Tripeptidyl_Aminopeptidase_II"/>
    <property type="match status" value="1"/>
</dbReference>
<dbReference type="DisProt" id="DP02711"/>
<dbReference type="FunFam" id="3.40.50.200:FF:000003">
    <property type="entry name" value="Tripeptidyl peptidase 2"/>
    <property type="match status" value="1"/>
</dbReference>
<dbReference type="FunFam" id="1.25.40.710:FF:000004">
    <property type="entry name" value="Tripeptidyl-peptidase 2"/>
    <property type="match status" value="1"/>
</dbReference>
<dbReference type="FunFam" id="2.60.40.3170:FF:000003">
    <property type="entry name" value="tripeptidyl-peptidase 2"/>
    <property type="match status" value="1"/>
</dbReference>
<dbReference type="Gene3D" id="1.25.40.710">
    <property type="match status" value="1"/>
</dbReference>
<dbReference type="Gene3D" id="2.20.25.690">
    <property type="match status" value="1"/>
</dbReference>
<dbReference type="Gene3D" id="2.60.40.3170">
    <property type="match status" value="1"/>
</dbReference>
<dbReference type="Gene3D" id="6.10.250.3080">
    <property type="match status" value="1"/>
</dbReference>
<dbReference type="Gene3D" id="3.40.50.200">
    <property type="entry name" value="Peptidase S8/S53 domain"/>
    <property type="match status" value="1"/>
</dbReference>
<dbReference type="InterPro" id="IPR000209">
    <property type="entry name" value="Peptidase_S8/S53_dom"/>
</dbReference>
<dbReference type="InterPro" id="IPR036852">
    <property type="entry name" value="Peptidase_S8/S53_dom_sf"/>
</dbReference>
<dbReference type="InterPro" id="IPR022398">
    <property type="entry name" value="Peptidase_S8_His-AS"/>
</dbReference>
<dbReference type="InterPro" id="IPR023828">
    <property type="entry name" value="Peptidase_S8_Ser-AS"/>
</dbReference>
<dbReference type="InterPro" id="IPR050131">
    <property type="entry name" value="Peptidase_S8_subtilisin-like"/>
</dbReference>
<dbReference type="InterPro" id="IPR015500">
    <property type="entry name" value="Peptidase_S8_subtilisin-rel"/>
</dbReference>
<dbReference type="InterPro" id="IPR034051">
    <property type="entry name" value="TPP_II_domain"/>
</dbReference>
<dbReference type="InterPro" id="IPR022232">
    <property type="entry name" value="TPPII_C_art"/>
</dbReference>
<dbReference type="InterPro" id="IPR046939">
    <property type="entry name" value="TPPII_C_sf"/>
</dbReference>
<dbReference type="InterPro" id="IPR048384">
    <property type="entry name" value="TPPII_GBD"/>
</dbReference>
<dbReference type="InterPro" id="IPR048383">
    <property type="entry name" value="TPPII_Ig-like-1"/>
</dbReference>
<dbReference type="InterPro" id="IPR022229">
    <property type="entry name" value="TPPII_Ig-like-2"/>
</dbReference>
<dbReference type="InterPro" id="IPR046940">
    <property type="entry name" value="TPPII_Ig-like_sf"/>
</dbReference>
<dbReference type="PANTHER" id="PTHR43806">
    <property type="entry name" value="PEPTIDASE S8"/>
    <property type="match status" value="1"/>
</dbReference>
<dbReference type="PANTHER" id="PTHR43806:SF14">
    <property type="entry name" value="TRIPEPTIDYL-PEPTIDASE 2"/>
    <property type="match status" value="1"/>
</dbReference>
<dbReference type="Pfam" id="PF00082">
    <property type="entry name" value="Peptidase_S8"/>
    <property type="match status" value="1"/>
</dbReference>
<dbReference type="Pfam" id="PF12580">
    <property type="entry name" value="TPPII"/>
    <property type="match status" value="1"/>
</dbReference>
<dbReference type="Pfam" id="PF12583">
    <property type="entry name" value="TPPII_C"/>
    <property type="match status" value="1"/>
</dbReference>
<dbReference type="Pfam" id="PF21316">
    <property type="entry name" value="TPPII_GBD"/>
    <property type="match status" value="1"/>
</dbReference>
<dbReference type="Pfam" id="PF21223">
    <property type="entry name" value="TPPII_Ig-like-1"/>
    <property type="match status" value="1"/>
</dbReference>
<dbReference type="PRINTS" id="PR00723">
    <property type="entry name" value="SUBTILISIN"/>
</dbReference>
<dbReference type="SUPFAM" id="SSF52743">
    <property type="entry name" value="Subtilisin-like"/>
    <property type="match status" value="1"/>
</dbReference>
<dbReference type="PROSITE" id="PS51892">
    <property type="entry name" value="SUBTILASE"/>
    <property type="match status" value="1"/>
</dbReference>
<dbReference type="PROSITE" id="PS00137">
    <property type="entry name" value="SUBTILASE_HIS"/>
    <property type="match status" value="1"/>
</dbReference>
<dbReference type="PROSITE" id="PS00138">
    <property type="entry name" value="SUBTILASE_SER"/>
    <property type="match status" value="1"/>
</dbReference>
<feature type="chain" id="PRO_0000076425" description="Tripeptidyl-peptidase 2">
    <location>
        <begin position="1"/>
        <end position="1441"/>
    </location>
</feature>
<feature type="domain" description="Peptidase S8" evidence="2">
    <location>
        <begin position="107"/>
        <end position="608"/>
    </location>
</feature>
<feature type="region of interest" description="Disordered" evidence="3">
    <location>
        <begin position="62"/>
        <end position="89"/>
    </location>
</feature>
<feature type="region of interest" description="Disordered" evidence="3">
    <location>
        <begin position="1139"/>
        <end position="1190"/>
    </location>
</feature>
<feature type="region of interest" description="Disordered" evidence="3">
    <location>
        <begin position="1255"/>
        <end position="1274"/>
    </location>
</feature>
<feature type="compositionally biased region" description="Basic and acidic residues" evidence="3">
    <location>
        <begin position="75"/>
        <end position="85"/>
    </location>
</feature>
<feature type="compositionally biased region" description="Low complexity" evidence="3">
    <location>
        <begin position="1139"/>
        <end position="1155"/>
    </location>
</feature>
<feature type="compositionally biased region" description="Basic and acidic residues" evidence="3">
    <location>
        <begin position="1265"/>
        <end position="1274"/>
    </location>
</feature>
<feature type="active site" description="Charge relay system" evidence="2 7">
    <location>
        <position position="131"/>
    </location>
</feature>
<feature type="active site" description="Charge relay system" evidence="2 7">
    <location>
        <position position="359"/>
    </location>
</feature>
<feature type="active site" description="Charge relay system" evidence="2 7">
    <location>
        <position position="549"/>
    </location>
</feature>
<feature type="modified residue" description="Phosphoserine" evidence="6">
    <location>
        <position position="1182"/>
    </location>
</feature>
<feature type="splice variant" id="VSP_015220" description="In isoform 2." evidence="9 10">
    <location>
        <begin position="1"/>
        <end position="87"/>
    </location>
</feature>
<feature type="sequence conflict" description="In Ref. 4; AAN71159." evidence="11" ref="4">
    <original>V</original>
    <variation>M</variation>
    <location>
        <position position="103"/>
    </location>
</feature>
<feature type="sequence conflict" description="In Ref. 1; AAC28563." evidence="11" ref="1">
    <original>A</original>
    <variation>G</variation>
    <location>
        <position position="1377"/>
    </location>
</feature>
<feature type="turn" evidence="13">
    <location>
        <begin position="107"/>
        <end position="110"/>
    </location>
</feature>
<feature type="helix" evidence="13">
    <location>
        <begin position="114"/>
        <end position="116"/>
    </location>
</feature>
<feature type="strand" evidence="13">
    <location>
        <begin position="126"/>
        <end position="132"/>
    </location>
</feature>
<feature type="strand" evidence="13">
    <location>
        <begin position="147"/>
        <end position="149"/>
    </location>
</feature>
<feature type="strand" evidence="13">
    <location>
        <begin position="154"/>
        <end position="157"/>
    </location>
</feature>
<feature type="strand" evidence="13">
    <location>
        <begin position="163"/>
        <end position="165"/>
    </location>
</feature>
<feature type="strand" evidence="13">
    <location>
        <begin position="219"/>
        <end position="224"/>
    </location>
</feature>
<feature type="strand" evidence="13">
    <location>
        <begin position="226"/>
        <end position="229"/>
    </location>
</feature>
<feature type="helix" evidence="13">
    <location>
        <begin position="234"/>
        <end position="236"/>
    </location>
</feature>
<feature type="strand" evidence="13">
    <location>
        <begin position="240"/>
        <end position="242"/>
    </location>
</feature>
<feature type="turn" evidence="13">
    <location>
        <begin position="243"/>
        <end position="246"/>
    </location>
</feature>
<feature type="strand" evidence="13">
    <location>
        <begin position="257"/>
        <end position="259"/>
    </location>
</feature>
<feature type="turn" evidence="13">
    <location>
        <begin position="262"/>
        <end position="264"/>
    </location>
</feature>
<feature type="helix" evidence="13">
    <location>
        <begin position="265"/>
        <end position="282"/>
    </location>
</feature>
<feature type="helix" evidence="13">
    <location>
        <begin position="285"/>
        <end position="287"/>
    </location>
</feature>
<feature type="strand" evidence="13">
    <location>
        <begin position="291"/>
        <end position="297"/>
    </location>
</feature>
<feature type="strand" evidence="13">
    <location>
        <begin position="300"/>
        <end position="302"/>
    </location>
</feature>
<feature type="strand" evidence="13">
    <location>
        <begin position="304"/>
        <end position="307"/>
    </location>
</feature>
<feature type="strand" evidence="13">
    <location>
        <begin position="309"/>
        <end position="312"/>
    </location>
</feature>
<feature type="strand" evidence="13">
    <location>
        <begin position="318"/>
        <end position="322"/>
    </location>
</feature>
<feature type="turn" evidence="13">
    <location>
        <begin position="324"/>
        <end position="327"/>
    </location>
</feature>
<feature type="strand" evidence="13">
    <location>
        <begin position="332"/>
        <end position="336"/>
    </location>
</feature>
<feature type="strand" evidence="13">
    <location>
        <begin position="338"/>
        <end position="344"/>
    </location>
</feature>
<feature type="helix" evidence="13">
    <location>
        <begin position="345"/>
        <end position="347"/>
    </location>
</feature>
<feature type="strand" evidence="13">
    <location>
        <begin position="349"/>
        <end position="354"/>
    </location>
</feature>
<feature type="helix" evidence="13">
    <location>
        <begin position="358"/>
        <end position="367"/>
    </location>
</feature>
<feature type="strand" evidence="13">
    <location>
        <begin position="372"/>
        <end position="376"/>
    </location>
</feature>
<feature type="strand" evidence="13">
    <location>
        <begin position="384"/>
        <end position="389"/>
    </location>
</feature>
<feature type="turn" evidence="13">
    <location>
        <begin position="393"/>
        <end position="395"/>
    </location>
</feature>
<feature type="helix" evidence="13">
    <location>
        <begin position="401"/>
        <end position="416"/>
    </location>
</feature>
<feature type="strand" evidence="13">
    <location>
        <begin position="423"/>
        <end position="426"/>
    </location>
</feature>
<feature type="helix" evidence="13">
    <location>
        <begin position="439"/>
        <end position="449"/>
    </location>
</feature>
<feature type="strand" evidence="13">
    <location>
        <begin position="454"/>
        <end position="458"/>
    </location>
</feature>
<feature type="strand" evidence="13">
    <location>
        <begin position="464"/>
        <end position="467"/>
    </location>
</feature>
<feature type="turn" evidence="13">
    <location>
        <begin position="471"/>
        <end position="473"/>
    </location>
</feature>
<feature type="strand" evidence="13">
    <location>
        <begin position="475"/>
        <end position="478"/>
    </location>
</feature>
<feature type="strand" evidence="13">
    <location>
        <begin position="480"/>
        <end position="486"/>
    </location>
</feature>
<feature type="strand" evidence="13">
    <location>
        <begin position="516"/>
        <end position="519"/>
    </location>
</feature>
<feature type="strand" evidence="13">
    <location>
        <begin position="522"/>
        <end position="527"/>
    </location>
</feature>
<feature type="helix" evidence="13">
    <location>
        <begin position="548"/>
        <end position="550"/>
    </location>
</feature>
<feature type="helix" evidence="13">
    <location>
        <begin position="552"/>
        <end position="568"/>
    </location>
</feature>
<feature type="helix" evidence="13">
    <location>
        <begin position="575"/>
        <end position="583"/>
    </location>
</feature>
<feature type="turn" evidence="13">
    <location>
        <begin position="594"/>
        <end position="596"/>
    </location>
</feature>
<feature type="strand" evidence="13">
    <location>
        <begin position="597"/>
        <end position="601"/>
    </location>
</feature>
<feature type="helix" evidence="13">
    <location>
        <begin position="604"/>
        <end position="612"/>
    </location>
</feature>
<feature type="turn" evidence="13">
    <location>
        <begin position="613"/>
        <end position="616"/>
    </location>
</feature>
<feature type="helix" evidence="13">
    <location>
        <begin position="618"/>
        <end position="621"/>
    </location>
</feature>
<feature type="strand" evidence="13">
    <location>
        <begin position="622"/>
        <end position="628"/>
    </location>
</feature>
<feature type="turn" evidence="13">
    <location>
        <begin position="629"/>
        <end position="632"/>
    </location>
</feature>
<feature type="strand" evidence="13">
    <location>
        <begin position="633"/>
        <end position="638"/>
    </location>
</feature>
<feature type="strand" evidence="13">
    <location>
        <begin position="647"/>
        <end position="659"/>
    </location>
</feature>
<feature type="strand" evidence="13">
    <location>
        <begin position="663"/>
        <end position="665"/>
    </location>
</feature>
<feature type="strand" evidence="13">
    <location>
        <begin position="674"/>
        <end position="681"/>
    </location>
</feature>
<feature type="strand" evidence="13">
    <location>
        <begin position="684"/>
        <end position="686"/>
    </location>
</feature>
<feature type="strand" evidence="13">
    <location>
        <begin position="697"/>
        <end position="703"/>
    </location>
</feature>
<feature type="helix" evidence="13">
    <location>
        <begin position="705"/>
        <end position="707"/>
    </location>
</feature>
<feature type="strand" evidence="13">
    <location>
        <begin position="710"/>
        <end position="723"/>
    </location>
</feature>
<feature type="strand" evidence="13">
    <location>
        <begin position="730"/>
        <end position="739"/>
    </location>
</feature>
<feature type="strand" evidence="13">
    <location>
        <begin position="746"/>
        <end position="749"/>
    </location>
</feature>
<feature type="strand" evidence="13">
    <location>
        <begin position="757"/>
        <end position="759"/>
    </location>
</feature>
<feature type="strand" evidence="13">
    <location>
        <begin position="763"/>
        <end position="765"/>
    </location>
</feature>
<feature type="strand" evidence="13">
    <location>
        <begin position="771"/>
        <end position="776"/>
    </location>
</feature>
<feature type="strand" evidence="13">
    <location>
        <begin position="783"/>
        <end position="790"/>
    </location>
</feature>
<feature type="strand" evidence="13">
    <location>
        <begin position="799"/>
        <end position="808"/>
    </location>
</feature>
<feature type="helix" evidence="13">
    <location>
        <begin position="815"/>
        <end position="817"/>
    </location>
</feature>
<feature type="strand" evidence="13">
    <location>
        <begin position="818"/>
        <end position="830"/>
    </location>
</feature>
<feature type="strand" evidence="13">
    <location>
        <begin position="832"/>
        <end position="837"/>
    </location>
</feature>
<feature type="strand" evidence="13">
    <location>
        <begin position="842"/>
        <end position="850"/>
    </location>
</feature>
<feature type="strand" evidence="13">
    <location>
        <begin position="854"/>
        <end position="856"/>
    </location>
</feature>
<feature type="strand" evidence="13">
    <location>
        <begin position="858"/>
        <end position="867"/>
    </location>
</feature>
<feature type="strand" evidence="13">
    <location>
        <begin position="869"/>
        <end position="871"/>
    </location>
</feature>
<feature type="turn" evidence="13">
    <location>
        <begin position="874"/>
        <end position="877"/>
    </location>
</feature>
<feature type="strand" evidence="13">
    <location>
        <begin position="878"/>
        <end position="880"/>
    </location>
</feature>
<feature type="strand" evidence="13">
    <location>
        <begin position="886"/>
        <end position="894"/>
    </location>
</feature>
<feature type="strand" evidence="13">
    <location>
        <begin position="896"/>
        <end position="911"/>
    </location>
</feature>
<feature type="strand" evidence="13">
    <location>
        <begin position="916"/>
        <end position="920"/>
    </location>
</feature>
<feature type="strand" evidence="13">
    <location>
        <begin position="923"/>
        <end position="928"/>
    </location>
</feature>
<feature type="turn" evidence="13">
    <location>
        <begin position="929"/>
        <end position="931"/>
    </location>
</feature>
<feature type="strand" evidence="13">
    <location>
        <begin position="935"/>
        <end position="947"/>
    </location>
</feature>
<feature type="strand" evidence="13">
    <location>
        <begin position="949"/>
        <end position="954"/>
    </location>
</feature>
<feature type="turn" evidence="13">
    <location>
        <begin position="956"/>
        <end position="960"/>
    </location>
</feature>
<feature type="strand" evidence="13">
    <location>
        <begin position="962"/>
        <end position="964"/>
    </location>
</feature>
<feature type="strand" evidence="13">
    <location>
        <begin position="966"/>
        <end position="968"/>
    </location>
</feature>
<feature type="strand" evidence="13">
    <location>
        <begin position="972"/>
        <end position="975"/>
    </location>
</feature>
<feature type="strand" evidence="13">
    <location>
        <begin position="981"/>
        <end position="985"/>
    </location>
</feature>
<feature type="strand" evidence="13">
    <location>
        <begin position="994"/>
        <end position="996"/>
    </location>
</feature>
<feature type="strand" evidence="13">
    <location>
        <begin position="998"/>
        <end position="1010"/>
    </location>
</feature>
<feature type="helix" evidence="13">
    <location>
        <begin position="1012"/>
        <end position="1015"/>
    </location>
</feature>
<feature type="helix" evidence="13">
    <location>
        <begin position="1016"/>
        <end position="1018"/>
    </location>
</feature>
<feature type="strand" evidence="13">
    <location>
        <begin position="1023"/>
        <end position="1035"/>
    </location>
</feature>
<feature type="strand" evidence="13">
    <location>
        <begin position="1038"/>
        <end position="1040"/>
    </location>
</feature>
<feature type="helix" evidence="13">
    <location>
        <begin position="1041"/>
        <end position="1045"/>
    </location>
</feature>
<feature type="strand" evidence="13">
    <location>
        <begin position="1054"/>
        <end position="1056"/>
    </location>
</feature>
<feature type="strand" evidence="13">
    <location>
        <begin position="1058"/>
        <end position="1065"/>
    </location>
</feature>
<feature type="helix" evidence="13">
    <location>
        <begin position="1070"/>
        <end position="1074"/>
    </location>
</feature>
<feature type="turn" evidence="13">
    <location>
        <begin position="1075"/>
        <end position="1077"/>
    </location>
</feature>
<feature type="strand" evidence="13">
    <location>
        <begin position="1082"/>
        <end position="1093"/>
    </location>
</feature>
<feature type="helix" evidence="13">
    <location>
        <begin position="1095"/>
        <end position="1100"/>
    </location>
</feature>
<feature type="strand" evidence="13">
    <location>
        <begin position="1103"/>
        <end position="1108"/>
    </location>
</feature>
<feature type="helix" evidence="13">
    <location>
        <begin position="1190"/>
        <end position="1205"/>
    </location>
</feature>
<feature type="helix" evidence="13">
    <location>
        <begin position="1210"/>
        <end position="1223"/>
    </location>
</feature>
<feature type="helix" evidence="13">
    <location>
        <begin position="1229"/>
        <end position="1241"/>
    </location>
</feature>
<feature type="helix" evidence="13">
    <location>
        <begin position="1248"/>
        <end position="1253"/>
    </location>
</feature>
<feature type="helix" evidence="13">
    <location>
        <begin position="1265"/>
        <end position="1268"/>
    </location>
</feature>
<feature type="helix" evidence="13">
    <location>
        <begin position="1271"/>
        <end position="1289"/>
    </location>
</feature>
<feature type="helix" evidence="13">
    <location>
        <begin position="1293"/>
        <end position="1296"/>
    </location>
</feature>
<feature type="turn" evidence="13">
    <location>
        <begin position="1297"/>
        <end position="1299"/>
    </location>
</feature>
<feature type="helix" evidence="13">
    <location>
        <begin position="1307"/>
        <end position="1310"/>
    </location>
</feature>
<feature type="strand" evidence="13">
    <location>
        <begin position="1312"/>
        <end position="1314"/>
    </location>
</feature>
<feature type="helix" evidence="13">
    <location>
        <begin position="1317"/>
        <end position="1345"/>
    </location>
</feature>
<feature type="helix" evidence="13">
    <location>
        <begin position="1349"/>
        <end position="1351"/>
    </location>
</feature>
<feature type="helix" evidence="13">
    <location>
        <begin position="1352"/>
        <end position="1362"/>
    </location>
</feature>
<feature type="turn" evidence="13">
    <location>
        <begin position="1371"/>
        <end position="1373"/>
    </location>
</feature>
<feature type="helix" evidence="13">
    <location>
        <begin position="1374"/>
        <end position="1384"/>
    </location>
</feature>
<feature type="helix" evidence="13">
    <location>
        <begin position="1387"/>
        <end position="1400"/>
    </location>
</feature>
<feature type="helix" evidence="13">
    <location>
        <begin position="1404"/>
        <end position="1417"/>
    </location>
</feature>
<feature type="helix" evidence="13">
    <location>
        <begin position="1420"/>
        <end position="1433"/>
    </location>
</feature>
<sequence length="1441" mass="158737">MFNRFRLVHKQLRLYKNFGLLGQKASVGLTLPIISLSRPYMAYMGTERSVVMITAPATKEFAESSERSNSSKKTTNKEQSDKSAESRMATSGIVESFPTGALVPKAETGVLNFLQKYPEYDGRDVTIAIFDSGVDPRATGLETLCDGKTVKVIERYDCSGCGDVDMKKKVTPDENGNIKGLSGNSLKLSPELMALNTDPEKAVRVGLKSFSDLLPSKVRNNIVAQAKLKHWDKPHKTATANASRKIVEFESQNPGEASKLPWDKKILKENLDFELEMLNSYEKVYGDIKTSYDCILFPTADGWLTIVDTTEQGDLDQALRIGEYSRTHETRNVDDFLSISVNVHDEGNVLEVVGMSSPHGTHVSSIASGNHSSRDVDGVAPNAKIVSMTIGDGRLGSMETGTALVRAMTKVMELCRDGRRIDVINMSYGEHANWSNSGRIGELMNEVVNKYGVVWVASAGNHGPALCTVGTPPDISQPSLIGVGAYVSPQMMEAEYAMREKLPGNVYTWTSRDPCIDGGQGVTVCAPGGAIASVPQFTMSKSQLMNGTSMAAPHVAGAVALLISGLKQQNIEYSPYSIKRAISVTATKLGYVDPFAQGHGLLNVEKAFEHLTEHRQSKDNMLRFSVRVGNNADKGIHLRQGVQRNSIDYNVYIEPIFYNDKEADPKDKFNFNVRLNLIASQPWVQCGAFLDLSYGTRSIAVRVDPTGLQPGVHSAVIRAYDTDCVQKGSLFEIPVTVVQPHVLESDQNTPVFEPASSKGDNSVEFQPNTIQRDFILVPERATWAELRMRITDPNRGEDIGKFFVHTNQLLPKQSCRKLETMKIVSVGSENESIMAFKVKSGRILELCIAKYWSNYGQSHLKYSLRFRGVEAHNPNAYVMHAGRGIHKLEIEALVAEDVQPQLQLKNAEVVLKPTEAKISPLSATRDVIPDGRQVYQNLLAFNLNVAKAADVSIYAPIFNDLLYEAEFESQMWMLFDANKALVATGDAHSHTSFTKLDKGEYTIRLQVRHEKRDLLEKISEANLVASFKLTSPLTLDFYENYNQCIVGGRKYVSSPLRLSTRVLYIAPITQERLTKANLPAQCAWLSGNLVFPQDEVGRRVAQHPFTYILNPAEKKSHTNGSSNGSSAAGSTATAAAVTTANGAKPKAPATPQAATSVTNPAAGDGISVQNDPPVDSSGSPASPKKGKANADDYAESFRDFQCSQIVKCELEMAEKIYNDVVAAHPKHLQANLLLIQNIESNQLKSQLPLTFVNAQKTSPPEAGESADKQKEDQKKVRSALERIVKLADKVIQETDSEALLSYYGLKNDTRADAAKIKTNMDKQKNTLIEALSKKGIAVAKLAVLDDCIKDSLAEINELYTEIIKFVDANDSKAIQFALWHAYAHGHYGRMYKYVVKLIEEKRTRDHFVELAAINGALGHEHIRTVINRMMITAFPSSFRLF</sequence>
<accession>Q9V6K1</accession>
<accession>B5RJ14</accession>
<accession>O76251</accession>
<accession>Q8IH59</accession>
<accession>Q8ML58</accession>
<reference key="1">
    <citation type="journal article" date="1998" name="J. Biol. Chem.">
        <title>Characterization and cloning of tripeptidyl peptidase II from the fruit fly, Drosophila melanogaster.</title>
        <authorList>
            <person name="Renn S.C.P."/>
            <person name="Tomkinson B."/>
            <person name="Taghert P.H."/>
        </authorList>
    </citation>
    <scope>NUCLEOTIDE SEQUENCE [MRNA] (ISOFORM 2)</scope>
    <scope>CATALYTIC ACTIVITY</scope>
    <scope>ACTIVITY REGULATION</scope>
    <scope>BIOPHYSICOCHEMICAL PROPERTIES</scope>
</reference>
<reference key="2">
    <citation type="journal article" date="2000" name="Science">
        <title>The genome sequence of Drosophila melanogaster.</title>
        <authorList>
            <person name="Adams M.D."/>
            <person name="Celniker S.E."/>
            <person name="Holt R.A."/>
            <person name="Evans C.A."/>
            <person name="Gocayne J.D."/>
            <person name="Amanatides P.G."/>
            <person name="Scherer S.E."/>
            <person name="Li P.W."/>
            <person name="Hoskins R.A."/>
            <person name="Galle R.F."/>
            <person name="George R.A."/>
            <person name="Lewis S.E."/>
            <person name="Richards S."/>
            <person name="Ashburner M."/>
            <person name="Henderson S.N."/>
            <person name="Sutton G.G."/>
            <person name="Wortman J.R."/>
            <person name="Yandell M.D."/>
            <person name="Zhang Q."/>
            <person name="Chen L.X."/>
            <person name="Brandon R.C."/>
            <person name="Rogers Y.-H.C."/>
            <person name="Blazej R.G."/>
            <person name="Champe M."/>
            <person name="Pfeiffer B.D."/>
            <person name="Wan K.H."/>
            <person name="Doyle C."/>
            <person name="Baxter E.G."/>
            <person name="Helt G."/>
            <person name="Nelson C.R."/>
            <person name="Miklos G.L.G."/>
            <person name="Abril J.F."/>
            <person name="Agbayani A."/>
            <person name="An H.-J."/>
            <person name="Andrews-Pfannkoch C."/>
            <person name="Baldwin D."/>
            <person name="Ballew R.M."/>
            <person name="Basu A."/>
            <person name="Baxendale J."/>
            <person name="Bayraktaroglu L."/>
            <person name="Beasley E.M."/>
            <person name="Beeson K.Y."/>
            <person name="Benos P.V."/>
            <person name="Berman B.P."/>
            <person name="Bhandari D."/>
            <person name="Bolshakov S."/>
            <person name="Borkova D."/>
            <person name="Botchan M.R."/>
            <person name="Bouck J."/>
            <person name="Brokstein P."/>
            <person name="Brottier P."/>
            <person name="Burtis K.C."/>
            <person name="Busam D.A."/>
            <person name="Butler H."/>
            <person name="Cadieu E."/>
            <person name="Center A."/>
            <person name="Chandra I."/>
            <person name="Cherry J.M."/>
            <person name="Cawley S."/>
            <person name="Dahlke C."/>
            <person name="Davenport L.B."/>
            <person name="Davies P."/>
            <person name="de Pablos B."/>
            <person name="Delcher A."/>
            <person name="Deng Z."/>
            <person name="Mays A.D."/>
            <person name="Dew I."/>
            <person name="Dietz S.M."/>
            <person name="Dodson K."/>
            <person name="Doup L.E."/>
            <person name="Downes M."/>
            <person name="Dugan-Rocha S."/>
            <person name="Dunkov B.C."/>
            <person name="Dunn P."/>
            <person name="Durbin K.J."/>
            <person name="Evangelista C.C."/>
            <person name="Ferraz C."/>
            <person name="Ferriera S."/>
            <person name="Fleischmann W."/>
            <person name="Fosler C."/>
            <person name="Gabrielian A.E."/>
            <person name="Garg N.S."/>
            <person name="Gelbart W.M."/>
            <person name="Glasser K."/>
            <person name="Glodek A."/>
            <person name="Gong F."/>
            <person name="Gorrell J.H."/>
            <person name="Gu Z."/>
            <person name="Guan P."/>
            <person name="Harris M."/>
            <person name="Harris N.L."/>
            <person name="Harvey D.A."/>
            <person name="Heiman T.J."/>
            <person name="Hernandez J.R."/>
            <person name="Houck J."/>
            <person name="Hostin D."/>
            <person name="Houston K.A."/>
            <person name="Howland T.J."/>
            <person name="Wei M.-H."/>
            <person name="Ibegwam C."/>
            <person name="Jalali M."/>
            <person name="Kalush F."/>
            <person name="Karpen G.H."/>
            <person name="Ke Z."/>
            <person name="Kennison J.A."/>
            <person name="Ketchum K.A."/>
            <person name="Kimmel B.E."/>
            <person name="Kodira C.D."/>
            <person name="Kraft C.L."/>
            <person name="Kravitz S."/>
            <person name="Kulp D."/>
            <person name="Lai Z."/>
            <person name="Lasko P."/>
            <person name="Lei Y."/>
            <person name="Levitsky A.A."/>
            <person name="Li J.H."/>
            <person name="Li Z."/>
            <person name="Liang Y."/>
            <person name="Lin X."/>
            <person name="Liu X."/>
            <person name="Mattei B."/>
            <person name="McIntosh T.C."/>
            <person name="McLeod M.P."/>
            <person name="McPherson D."/>
            <person name="Merkulov G."/>
            <person name="Milshina N.V."/>
            <person name="Mobarry C."/>
            <person name="Morris J."/>
            <person name="Moshrefi A."/>
            <person name="Mount S.M."/>
            <person name="Moy M."/>
            <person name="Murphy B."/>
            <person name="Murphy L."/>
            <person name="Muzny D.M."/>
            <person name="Nelson D.L."/>
            <person name="Nelson D.R."/>
            <person name="Nelson K.A."/>
            <person name="Nixon K."/>
            <person name="Nusskern D.R."/>
            <person name="Pacleb J.M."/>
            <person name="Palazzolo M."/>
            <person name="Pittman G.S."/>
            <person name="Pan S."/>
            <person name="Pollard J."/>
            <person name="Puri V."/>
            <person name="Reese M.G."/>
            <person name="Reinert K."/>
            <person name="Remington K."/>
            <person name="Saunders R.D.C."/>
            <person name="Scheeler F."/>
            <person name="Shen H."/>
            <person name="Shue B.C."/>
            <person name="Siden-Kiamos I."/>
            <person name="Simpson M."/>
            <person name="Skupski M.P."/>
            <person name="Smith T.J."/>
            <person name="Spier E."/>
            <person name="Spradling A.C."/>
            <person name="Stapleton M."/>
            <person name="Strong R."/>
            <person name="Sun E."/>
            <person name="Svirskas R."/>
            <person name="Tector C."/>
            <person name="Turner R."/>
            <person name="Venter E."/>
            <person name="Wang A.H."/>
            <person name="Wang X."/>
            <person name="Wang Z.-Y."/>
            <person name="Wassarman D.A."/>
            <person name="Weinstock G.M."/>
            <person name="Weissenbach J."/>
            <person name="Williams S.M."/>
            <person name="Woodage T."/>
            <person name="Worley K.C."/>
            <person name="Wu D."/>
            <person name="Yang S."/>
            <person name="Yao Q.A."/>
            <person name="Ye J."/>
            <person name="Yeh R.-F."/>
            <person name="Zaveri J.S."/>
            <person name="Zhan M."/>
            <person name="Zhang G."/>
            <person name="Zhao Q."/>
            <person name="Zheng L."/>
            <person name="Zheng X.H."/>
            <person name="Zhong F.N."/>
            <person name="Zhong W."/>
            <person name="Zhou X."/>
            <person name="Zhu S.C."/>
            <person name="Zhu X."/>
            <person name="Smith H.O."/>
            <person name="Gibbs R.A."/>
            <person name="Myers E.W."/>
            <person name="Rubin G.M."/>
            <person name="Venter J.C."/>
        </authorList>
    </citation>
    <scope>NUCLEOTIDE SEQUENCE [LARGE SCALE GENOMIC DNA]</scope>
    <source>
        <strain>Berkeley</strain>
    </source>
</reference>
<reference key="3">
    <citation type="journal article" date="2002" name="Genome Biol.">
        <title>Annotation of the Drosophila melanogaster euchromatic genome: a systematic review.</title>
        <authorList>
            <person name="Misra S."/>
            <person name="Crosby M.A."/>
            <person name="Mungall C.J."/>
            <person name="Matthews B.B."/>
            <person name="Campbell K.S."/>
            <person name="Hradecky P."/>
            <person name="Huang Y."/>
            <person name="Kaminker J.S."/>
            <person name="Millburn G.H."/>
            <person name="Prochnik S.E."/>
            <person name="Smith C.D."/>
            <person name="Tupy J.L."/>
            <person name="Whitfield E.J."/>
            <person name="Bayraktaroglu L."/>
            <person name="Berman B.P."/>
            <person name="Bettencourt B.R."/>
            <person name="Celniker S.E."/>
            <person name="de Grey A.D.N.J."/>
            <person name="Drysdale R.A."/>
            <person name="Harris N.L."/>
            <person name="Richter J."/>
            <person name="Russo S."/>
            <person name="Schroeder A.J."/>
            <person name="Shu S.Q."/>
            <person name="Stapleton M."/>
            <person name="Yamada C."/>
            <person name="Ashburner M."/>
            <person name="Gelbart W.M."/>
            <person name="Rubin G.M."/>
            <person name="Lewis S.E."/>
        </authorList>
    </citation>
    <scope>GENOME REANNOTATION</scope>
    <scope>ALTERNATIVE SPLICING</scope>
    <source>
        <strain>Berkeley</strain>
    </source>
</reference>
<reference key="4">
    <citation type="journal article" date="2002" name="Genome Biol.">
        <title>A Drosophila full-length cDNA resource.</title>
        <authorList>
            <person name="Stapleton M."/>
            <person name="Carlson J.W."/>
            <person name="Brokstein P."/>
            <person name="Yu C."/>
            <person name="Champe M."/>
            <person name="George R.A."/>
            <person name="Guarin H."/>
            <person name="Kronmiller B."/>
            <person name="Pacleb J.M."/>
            <person name="Park S."/>
            <person name="Wan K.H."/>
            <person name="Rubin G.M."/>
            <person name="Celniker S.E."/>
        </authorList>
    </citation>
    <scope>NUCLEOTIDE SEQUENCE [LARGE SCALE MRNA] (ISOFORM 1)</scope>
    <source>
        <strain>Berkeley</strain>
        <tissue>Head</tissue>
    </source>
</reference>
<reference key="5">
    <citation type="submission" date="2008-09" db="EMBL/GenBank/DDBJ databases">
        <authorList>
            <person name="Stapleton M."/>
            <person name="Brokstein P."/>
            <person name="Hong L."/>
            <person name="Agbayani A."/>
            <person name="Booth B."/>
            <person name="Carlson J.W."/>
            <person name="Champe M."/>
            <person name="Chavez C."/>
            <person name="Dorsett V."/>
            <person name="Dresnek D."/>
            <person name="Farfan D."/>
            <person name="Frise E."/>
            <person name="George R.A."/>
            <person name="Gonzalez M."/>
            <person name="Guarin H."/>
            <person name="Kronmiller B."/>
            <person name="Li P.W."/>
            <person name="Liao G."/>
            <person name="Miranda A."/>
            <person name="Mungall C.J."/>
            <person name="Nunoo J."/>
            <person name="Pacleb J.M."/>
            <person name="Paragas V."/>
            <person name="Park S."/>
            <person name="Patel S."/>
            <person name="Phouanenavong S."/>
            <person name="Wan K.H."/>
            <person name="Yu C."/>
            <person name="Lewis S.E."/>
            <person name="Rubin G.M."/>
            <person name="Celniker S.E."/>
        </authorList>
    </citation>
    <scope>NUCLEOTIDE SEQUENCE [LARGE SCALE MRNA] (ISOFORMS 1 AND 2)</scope>
    <source>
        <strain>Berkeley</strain>
        <tissue>Embryo</tissue>
    </source>
</reference>
<reference key="6">
    <citation type="journal article" date="2002" name="EMBO J.">
        <title>A giant protease with a twist: the TPP II complex from Drosophila studied by electron microscopy.</title>
        <authorList>
            <person name="Rockel B."/>
            <person name="Peters J."/>
            <person name="Kuhlmorgen B."/>
            <person name="Glaeser R.M."/>
            <person name="Baumeister W."/>
        </authorList>
    </citation>
    <scope>SUBUNIT</scope>
</reference>
<reference key="7">
    <citation type="journal article" date="2005" name="Proc. Natl. Acad. Sci. U.S.A.">
        <title>Molecular architecture and assembly mechanism of Drosophila tripeptidyl peptidase II.</title>
        <authorList>
            <person name="Rockel B."/>
            <person name="Peters J."/>
            <person name="Mueller S.A."/>
            <person name="Seyit G."/>
            <person name="Ringler P."/>
            <person name="Hegerl R."/>
            <person name="Glaeser R.M."/>
            <person name="Baumeister W."/>
        </authorList>
    </citation>
    <scope>SUBUNIT</scope>
    <scope>STRUCTURE OF THE HOMOOLIGOMER</scope>
</reference>
<reference key="8">
    <citation type="journal article" date="2008" name="J. Proteome Res.">
        <title>Phosphoproteome analysis of Drosophila melanogaster embryos.</title>
        <authorList>
            <person name="Zhai B."/>
            <person name="Villen J."/>
            <person name="Beausoleil S.A."/>
            <person name="Mintseris J."/>
            <person name="Gygi S.P."/>
        </authorList>
    </citation>
    <scope>PHOSPHORYLATION [LARGE SCALE ANALYSIS] AT SER-1182</scope>
    <scope>IDENTIFICATION BY MASS SPECTROMETRY</scope>
    <source>
        <tissue>Embryo</tissue>
    </source>
</reference>
<reference key="9">
    <citation type="journal article" date="2010" name="Nat. Struct. Mol. Biol.">
        <title>Hybrid molecular structure of the giant protease tripeptidyl peptidase II.</title>
        <authorList>
            <person name="Chuang C.K."/>
            <person name="Rockel B."/>
            <person name="Seyit G."/>
            <person name="Walian P.J."/>
            <person name="Schonegge A.M."/>
            <person name="Peters J."/>
            <person name="Zwart P.H."/>
            <person name="Baumeister W."/>
            <person name="Jap B.K."/>
        </authorList>
    </citation>
    <scope>X-RAY CRYSTALLOGRAPHY (3.14 ANGSTROMS) OF 89-1441</scope>
    <scope>ELECTRON MICROSCOPY (14 ANGSTROMS)</scope>
    <scope>SUBUNIT</scope>
    <scope>MECHANISM OF ACTION</scope>
    <scope>ACTIVE SITE</scope>
</reference>